<feature type="chain" id="PRO_0000142757" description="Matrix protein">
    <location>
        <begin position="1"/>
        <end position="375"/>
    </location>
</feature>
<organismHost>
    <name type="scientific">Homo sapiens</name>
    <name type="common">Human</name>
    <dbReference type="NCBI Taxonomy" id="9606"/>
</organismHost>
<keyword id="KW-0261">Viral envelope protein</keyword>
<keyword id="KW-0468">Viral matrix protein</keyword>
<keyword id="KW-0946">Virion</keyword>
<sequence length="375" mass="41554">MAGSQIKVPLPKPPDSDSQRLNAFPVIMAQEGKGRLLRQIRLRKILSGDPSDQQITFVNTYGFIRATPETSEFISESSQQEVTPVVTACMLSFGAGPVLEDPQHMLKALDQTDIRVRKTASDKEQILFEINRIPNLFRHHQISADHLIQASSDKYVKAPAKLIAGVNYIYCVTFLSVTVCSASLKFRVARPLLAARSRLVRAVQMEVLLRVTCKKDSQMAKSMLNDPDGEGCIASVWFHLCNLCKGRNKLRSYDENYFASKCRKMNLTVSIGDMWGPTILVHAGGHIPTTAKPFFNSRGWVCHPIHQSSPSLAKTLWSSGCEIKAASAILQGSDYASLAKTDDIIYSKIKVDKDAANYKGVSWSPFRKSASMSNL</sequence>
<organism>
    <name type="scientific">Mumps virus (strain SBL-1)</name>
    <name type="common">MuV</name>
    <dbReference type="NCBI Taxonomy" id="11173"/>
    <lineage>
        <taxon>Viruses</taxon>
        <taxon>Riboviria</taxon>
        <taxon>Orthornavirae</taxon>
        <taxon>Negarnaviricota</taxon>
        <taxon>Haploviricotina</taxon>
        <taxon>Monjiviricetes</taxon>
        <taxon>Mononegavirales</taxon>
        <taxon>Paramyxoviridae</taxon>
        <taxon>Rubulavirinae</taxon>
        <taxon>Orthorubulavirus</taxon>
        <taxon>Orthorubulavirus parotitidis</taxon>
        <taxon>Mumps orthorubulavirus</taxon>
    </lineage>
</organism>
<proteinExistence type="evidence at transcript level"/>
<accession>P19718</accession>
<comment type="function">
    <text evidence="2">The M protein has a crucial role in virus assembly and interacts with the RNP complex as well as with the viral membrane.</text>
</comment>
<comment type="subcellular location">
    <subcellularLocation>
        <location evidence="1">Virion</location>
    </subcellularLocation>
</comment>
<comment type="similarity">
    <text evidence="3">Belongs to the morbillivirus/respirovirus/rubulavirus M protein family.</text>
</comment>
<dbReference type="EMBL" id="M23430">
    <property type="status" value="NOT_ANNOTATED_CDS"/>
    <property type="molecule type" value="mRNA"/>
</dbReference>
<dbReference type="PIR" id="A31295">
    <property type="entry name" value="MFNZMS"/>
</dbReference>
<dbReference type="SMR" id="P19718"/>
<dbReference type="GO" id="GO:0019031">
    <property type="term" value="C:viral envelope"/>
    <property type="evidence" value="ECO:0007669"/>
    <property type="project" value="UniProtKB-KW"/>
</dbReference>
<dbReference type="GO" id="GO:0039660">
    <property type="term" value="F:structural constituent of virion"/>
    <property type="evidence" value="ECO:0007669"/>
    <property type="project" value="UniProtKB-KW"/>
</dbReference>
<dbReference type="GO" id="GO:0019068">
    <property type="term" value="P:virion assembly"/>
    <property type="evidence" value="ECO:0007669"/>
    <property type="project" value="InterPro"/>
</dbReference>
<dbReference type="Gene3D" id="2.70.20.60">
    <property type="entry name" value="Viral matrix protein, C-terminal domain"/>
    <property type="match status" value="1"/>
</dbReference>
<dbReference type="Gene3D" id="2.70.20.50">
    <property type="entry name" value="Viral matrix protein, N-terminal domain"/>
    <property type="match status" value="1"/>
</dbReference>
<dbReference type="InterPro" id="IPR042539">
    <property type="entry name" value="Matrix_C"/>
</dbReference>
<dbReference type="InterPro" id="IPR042540">
    <property type="entry name" value="Matrix_N"/>
</dbReference>
<dbReference type="InterPro" id="IPR055413">
    <property type="entry name" value="Matrix_Paramyxo_C"/>
</dbReference>
<dbReference type="InterPro" id="IPR000982">
    <property type="entry name" value="Matrix_Paramyxo_N"/>
</dbReference>
<dbReference type="Pfam" id="PF23765">
    <property type="entry name" value="Matrix_Paramyxo_C"/>
    <property type="match status" value="1"/>
</dbReference>
<dbReference type="Pfam" id="PF00661">
    <property type="entry name" value="Matrix_Paramyxo_N"/>
    <property type="match status" value="1"/>
</dbReference>
<protein>
    <recommendedName>
        <fullName>Matrix protein</fullName>
    </recommendedName>
</protein>
<evidence type="ECO:0000250" key="1">
    <source>
        <dbReference type="UniProtKB" id="Q9J4L4"/>
    </source>
</evidence>
<evidence type="ECO:0000250" key="2">
    <source>
        <dbReference type="UniProtKB" id="Q9W850"/>
    </source>
</evidence>
<evidence type="ECO:0000305" key="3"/>
<reference key="1">
    <citation type="journal article" date="1989" name="Virology">
        <title>Complete nucleotide sequence of the matrix protein mRNA of mumps virus.</title>
        <authorList>
            <person name="Elango N."/>
        </authorList>
    </citation>
    <scope>NUCLEOTIDE SEQUENCE [MRNA]</scope>
</reference>
<gene>
    <name type="primary">M</name>
</gene>
<name>MATRX_MUMP1</name>